<feature type="chain" id="PRO_0000319764" description="Histidinol-phosphate aminotransferase">
    <location>
        <begin position="1"/>
        <end position="360"/>
    </location>
</feature>
<feature type="modified residue" description="N6-(pyridoxal phosphate)lysine" evidence="1">
    <location>
        <position position="219"/>
    </location>
</feature>
<reference key="1">
    <citation type="submission" date="2006-02" db="EMBL/GenBank/DDBJ databases">
        <title>Complete sequence of chromosome of Jannaschia sp. CCS1.</title>
        <authorList>
            <consortium name="US DOE Joint Genome Institute"/>
            <person name="Copeland A."/>
            <person name="Lucas S."/>
            <person name="Lapidus A."/>
            <person name="Barry K."/>
            <person name="Detter J.C."/>
            <person name="Glavina del Rio T."/>
            <person name="Hammon N."/>
            <person name="Israni S."/>
            <person name="Pitluck S."/>
            <person name="Brettin T."/>
            <person name="Bruce D."/>
            <person name="Han C."/>
            <person name="Tapia R."/>
            <person name="Gilna P."/>
            <person name="Chertkov O."/>
            <person name="Saunders E."/>
            <person name="Schmutz J."/>
            <person name="Larimer F."/>
            <person name="Land M."/>
            <person name="Kyrpides N."/>
            <person name="Lykidis A."/>
            <person name="Moran M.A."/>
            <person name="Belas R."/>
            <person name="Ye W."/>
            <person name="Buchan A."/>
            <person name="Gonzalez J.M."/>
            <person name="Schell M.A."/>
            <person name="Richardson P."/>
        </authorList>
    </citation>
    <scope>NUCLEOTIDE SEQUENCE [LARGE SCALE GENOMIC DNA]</scope>
    <source>
        <strain>CCS1</strain>
    </source>
</reference>
<keyword id="KW-0028">Amino-acid biosynthesis</keyword>
<keyword id="KW-0032">Aminotransferase</keyword>
<keyword id="KW-0368">Histidine biosynthesis</keyword>
<keyword id="KW-0663">Pyridoxal phosphate</keyword>
<keyword id="KW-1185">Reference proteome</keyword>
<keyword id="KW-0808">Transferase</keyword>
<accession>Q28TL1</accession>
<proteinExistence type="inferred from homology"/>
<dbReference type="EC" id="2.6.1.9" evidence="1"/>
<dbReference type="EMBL" id="CP000264">
    <property type="protein sequence ID" value="ABD53951.1"/>
    <property type="molecule type" value="Genomic_DNA"/>
</dbReference>
<dbReference type="RefSeq" id="WP_011454158.1">
    <property type="nucleotide sequence ID" value="NC_007802.1"/>
</dbReference>
<dbReference type="SMR" id="Q28TL1"/>
<dbReference type="STRING" id="290400.Jann_1034"/>
<dbReference type="KEGG" id="jan:Jann_1034"/>
<dbReference type="eggNOG" id="COG0079">
    <property type="taxonomic scope" value="Bacteria"/>
</dbReference>
<dbReference type="HOGENOM" id="CLU_017584_3_3_5"/>
<dbReference type="OrthoDB" id="9809616at2"/>
<dbReference type="UniPathway" id="UPA00031">
    <property type="reaction ID" value="UER00012"/>
</dbReference>
<dbReference type="Proteomes" id="UP000008326">
    <property type="component" value="Chromosome"/>
</dbReference>
<dbReference type="GO" id="GO:0004400">
    <property type="term" value="F:histidinol-phosphate transaminase activity"/>
    <property type="evidence" value="ECO:0007669"/>
    <property type="project" value="UniProtKB-UniRule"/>
</dbReference>
<dbReference type="GO" id="GO:0030170">
    <property type="term" value="F:pyridoxal phosphate binding"/>
    <property type="evidence" value="ECO:0007669"/>
    <property type="project" value="InterPro"/>
</dbReference>
<dbReference type="GO" id="GO:0000105">
    <property type="term" value="P:L-histidine biosynthetic process"/>
    <property type="evidence" value="ECO:0007669"/>
    <property type="project" value="UniProtKB-UniRule"/>
</dbReference>
<dbReference type="CDD" id="cd00609">
    <property type="entry name" value="AAT_like"/>
    <property type="match status" value="1"/>
</dbReference>
<dbReference type="Gene3D" id="3.90.1150.10">
    <property type="entry name" value="Aspartate Aminotransferase, domain 1"/>
    <property type="match status" value="1"/>
</dbReference>
<dbReference type="Gene3D" id="3.40.640.10">
    <property type="entry name" value="Type I PLP-dependent aspartate aminotransferase-like (Major domain)"/>
    <property type="match status" value="1"/>
</dbReference>
<dbReference type="HAMAP" id="MF_01023">
    <property type="entry name" value="HisC_aminotrans_2"/>
    <property type="match status" value="1"/>
</dbReference>
<dbReference type="InterPro" id="IPR004839">
    <property type="entry name" value="Aminotransferase_I/II_large"/>
</dbReference>
<dbReference type="InterPro" id="IPR005861">
    <property type="entry name" value="HisP_aminotrans"/>
</dbReference>
<dbReference type="InterPro" id="IPR050106">
    <property type="entry name" value="HistidinolP_aminotransfase"/>
</dbReference>
<dbReference type="InterPro" id="IPR015424">
    <property type="entry name" value="PyrdxlP-dep_Trfase"/>
</dbReference>
<dbReference type="InterPro" id="IPR015421">
    <property type="entry name" value="PyrdxlP-dep_Trfase_major"/>
</dbReference>
<dbReference type="InterPro" id="IPR015422">
    <property type="entry name" value="PyrdxlP-dep_Trfase_small"/>
</dbReference>
<dbReference type="NCBIfam" id="TIGR01141">
    <property type="entry name" value="hisC"/>
    <property type="match status" value="1"/>
</dbReference>
<dbReference type="PANTHER" id="PTHR43643:SF3">
    <property type="entry name" value="HISTIDINOL-PHOSPHATE AMINOTRANSFERASE"/>
    <property type="match status" value="1"/>
</dbReference>
<dbReference type="PANTHER" id="PTHR43643">
    <property type="entry name" value="HISTIDINOL-PHOSPHATE AMINOTRANSFERASE 2"/>
    <property type="match status" value="1"/>
</dbReference>
<dbReference type="Pfam" id="PF00155">
    <property type="entry name" value="Aminotran_1_2"/>
    <property type="match status" value="1"/>
</dbReference>
<dbReference type="SUPFAM" id="SSF53383">
    <property type="entry name" value="PLP-dependent transferases"/>
    <property type="match status" value="1"/>
</dbReference>
<evidence type="ECO:0000255" key="1">
    <source>
        <dbReference type="HAMAP-Rule" id="MF_01023"/>
    </source>
</evidence>
<comment type="catalytic activity">
    <reaction evidence="1">
        <text>L-histidinol phosphate + 2-oxoglutarate = 3-(imidazol-4-yl)-2-oxopropyl phosphate + L-glutamate</text>
        <dbReference type="Rhea" id="RHEA:23744"/>
        <dbReference type="ChEBI" id="CHEBI:16810"/>
        <dbReference type="ChEBI" id="CHEBI:29985"/>
        <dbReference type="ChEBI" id="CHEBI:57766"/>
        <dbReference type="ChEBI" id="CHEBI:57980"/>
        <dbReference type="EC" id="2.6.1.9"/>
    </reaction>
</comment>
<comment type="cofactor">
    <cofactor evidence="1">
        <name>pyridoxal 5'-phosphate</name>
        <dbReference type="ChEBI" id="CHEBI:597326"/>
    </cofactor>
</comment>
<comment type="pathway">
    <text evidence="1">Amino-acid biosynthesis; L-histidine biosynthesis; L-histidine from 5-phospho-alpha-D-ribose 1-diphosphate: step 7/9.</text>
</comment>
<comment type="subunit">
    <text evidence="1">Homodimer.</text>
</comment>
<comment type="similarity">
    <text evidence="1">Belongs to the class-II pyridoxal-phosphate-dependent aminotransferase family. Histidinol-phosphate aminotransferase subfamily.</text>
</comment>
<protein>
    <recommendedName>
        <fullName evidence="1">Histidinol-phosphate aminotransferase</fullName>
        <ecNumber evidence="1">2.6.1.9</ecNumber>
    </recommendedName>
    <alternativeName>
        <fullName evidence="1">Imidazole acetol-phosphate transaminase</fullName>
    </alternativeName>
</protein>
<gene>
    <name evidence="1" type="primary">hisC</name>
    <name type="ordered locus">Jann_1034</name>
</gene>
<name>HIS8_JANSC</name>
<organism>
    <name type="scientific">Jannaschia sp. (strain CCS1)</name>
    <dbReference type="NCBI Taxonomy" id="290400"/>
    <lineage>
        <taxon>Bacteria</taxon>
        <taxon>Pseudomonadati</taxon>
        <taxon>Pseudomonadota</taxon>
        <taxon>Alphaproteobacteria</taxon>
        <taxon>Rhodobacterales</taxon>
        <taxon>Roseobacteraceae</taxon>
        <taxon>Jannaschia</taxon>
    </lineage>
</organism>
<sequence length="360" mass="37979">MTAPIRPQPGILDIALYQGGASKIAGHADPLKLSSNENPFGPSPAAVQAMADAVASSHRYPNTDHADLRAAISEIHGLEADNIICGVGSDEVIHFLCQCYAGPGDEVLYTQHGFGMYPIAAKAAGATPVQVAEDARHVDVDALIAGITPATRLIFIANPSNPCATMIDNGEITRLADALPDQCLLILDGAYVEFADGYDGGKNLVEARDNVVMTRTFSKVYGLGGLRVGYGYGPRHVIDTLNRIRGPFNLSGMALAGAEAAVRDVDWVNECLRVNADERARLVGGLRQLGLACDDSHANFVLARFASEAAADAADAHLKRDGIIVRAPKSYGLPDCLRITVGRPEDNSRVLASLTALVAA</sequence>